<gene>
    <name type="primary">zgpat</name>
    <name type="ORF">zgc:63730</name>
</gene>
<protein>
    <recommendedName>
        <fullName>Zinc finger CCCH-type with G patch domain-containing protein</fullName>
    </recommendedName>
</protein>
<organism>
    <name type="scientific">Danio rerio</name>
    <name type="common">Zebrafish</name>
    <name type="synonym">Brachydanio rerio</name>
    <dbReference type="NCBI Taxonomy" id="7955"/>
    <lineage>
        <taxon>Eukaryota</taxon>
        <taxon>Metazoa</taxon>
        <taxon>Chordata</taxon>
        <taxon>Craniata</taxon>
        <taxon>Vertebrata</taxon>
        <taxon>Euteleostomi</taxon>
        <taxon>Actinopterygii</taxon>
        <taxon>Neopterygii</taxon>
        <taxon>Teleostei</taxon>
        <taxon>Ostariophysi</taxon>
        <taxon>Cypriniformes</taxon>
        <taxon>Danionidae</taxon>
        <taxon>Danioninae</taxon>
        <taxon>Danio</taxon>
    </lineage>
</organism>
<dbReference type="EMBL" id="BC055224">
    <property type="protein sequence ID" value="AAH55224.1"/>
    <property type="molecule type" value="mRNA"/>
</dbReference>
<dbReference type="RefSeq" id="NP_956779.1">
    <property type="nucleotide sequence ID" value="NM_200485.2"/>
</dbReference>
<dbReference type="SMR" id="Q7SXW2"/>
<dbReference type="FunCoup" id="Q7SXW2">
    <property type="interactions" value="1619"/>
</dbReference>
<dbReference type="STRING" id="7955.ENSDARP00000030077"/>
<dbReference type="PaxDb" id="7955-ENSDARP00000030077"/>
<dbReference type="Ensembl" id="ENSDART00000037474">
    <property type="protein sequence ID" value="ENSDARP00000030077"/>
    <property type="gene ID" value="ENSDARG00000027403"/>
</dbReference>
<dbReference type="Ensembl" id="ENSDART00000190410">
    <property type="protein sequence ID" value="ENSDARP00000153327"/>
    <property type="gene ID" value="ENSDARG00000027403"/>
</dbReference>
<dbReference type="GeneID" id="393457"/>
<dbReference type="KEGG" id="dre:393457"/>
<dbReference type="AGR" id="ZFIN:ZDB-GENE-040426-1248"/>
<dbReference type="CTD" id="84619"/>
<dbReference type="ZFIN" id="ZDB-GENE-040426-1248">
    <property type="gene designation" value="zgpat"/>
</dbReference>
<dbReference type="eggNOG" id="KOG2185">
    <property type="taxonomic scope" value="Eukaryota"/>
</dbReference>
<dbReference type="HOGENOM" id="CLU_040504_1_0_1"/>
<dbReference type="InParanoid" id="Q7SXW2"/>
<dbReference type="OMA" id="QYTRGIG"/>
<dbReference type="OrthoDB" id="4822at2759"/>
<dbReference type="PhylomeDB" id="Q7SXW2"/>
<dbReference type="TreeFam" id="TF105970"/>
<dbReference type="PRO" id="PR:Q7SXW2"/>
<dbReference type="Proteomes" id="UP000000437">
    <property type="component" value="Chromosome 11"/>
</dbReference>
<dbReference type="Bgee" id="ENSDARG00000027403">
    <property type="expression patterns" value="Expressed in blastula and 27 other cell types or tissues"/>
</dbReference>
<dbReference type="GO" id="GO:0005634">
    <property type="term" value="C:nucleus"/>
    <property type="evidence" value="ECO:0000250"/>
    <property type="project" value="UniProtKB"/>
</dbReference>
<dbReference type="GO" id="GO:0003700">
    <property type="term" value="F:DNA-binding transcription factor activity"/>
    <property type="evidence" value="ECO:0000250"/>
    <property type="project" value="UniProtKB"/>
</dbReference>
<dbReference type="GO" id="GO:0001227">
    <property type="term" value="F:DNA-binding transcription repressor activity, RNA polymerase II-specific"/>
    <property type="evidence" value="ECO:0000318"/>
    <property type="project" value="GO_Central"/>
</dbReference>
<dbReference type="GO" id="GO:0000978">
    <property type="term" value="F:RNA polymerase II cis-regulatory region sequence-specific DNA binding"/>
    <property type="evidence" value="ECO:0000318"/>
    <property type="project" value="GO_Central"/>
</dbReference>
<dbReference type="GO" id="GO:0043565">
    <property type="term" value="F:sequence-specific DNA binding"/>
    <property type="evidence" value="ECO:0000250"/>
    <property type="project" value="UniProtKB"/>
</dbReference>
<dbReference type="GO" id="GO:0008270">
    <property type="term" value="F:zinc ion binding"/>
    <property type="evidence" value="ECO:0007669"/>
    <property type="project" value="UniProtKB-KW"/>
</dbReference>
<dbReference type="GO" id="GO:0045892">
    <property type="term" value="P:negative regulation of DNA-templated transcription"/>
    <property type="evidence" value="ECO:0000250"/>
    <property type="project" value="UniProtKB"/>
</dbReference>
<dbReference type="GO" id="GO:0007175">
    <property type="term" value="P:negative regulation of epidermal growth factor-activated receptor activity"/>
    <property type="evidence" value="ECO:0000250"/>
    <property type="project" value="UniProtKB"/>
</dbReference>
<dbReference type="GO" id="GO:0000122">
    <property type="term" value="P:negative regulation of transcription by RNA polymerase II"/>
    <property type="evidence" value="ECO:0000318"/>
    <property type="project" value="GO_Central"/>
</dbReference>
<dbReference type="CDD" id="cd20384">
    <property type="entry name" value="Tudor_ZGPAT"/>
    <property type="match status" value="1"/>
</dbReference>
<dbReference type="Gene3D" id="2.30.30.1190">
    <property type="match status" value="1"/>
</dbReference>
<dbReference type="Gene3D" id="2.30.30.140">
    <property type="match status" value="1"/>
</dbReference>
<dbReference type="InterPro" id="IPR000467">
    <property type="entry name" value="G_patch_dom"/>
</dbReference>
<dbReference type="InterPro" id="IPR000571">
    <property type="entry name" value="Znf_CCCH"/>
</dbReference>
<dbReference type="InterPro" id="IPR036855">
    <property type="entry name" value="Znf_CCCH_sf"/>
</dbReference>
<dbReference type="PANTHER" id="PTHR46297">
    <property type="entry name" value="ZINC FINGER CCCH-TYPE WITH G PATCH DOMAIN-CONTAINING PROTEIN"/>
    <property type="match status" value="1"/>
</dbReference>
<dbReference type="PANTHER" id="PTHR46297:SF1">
    <property type="entry name" value="ZINC FINGER CCCH-TYPE WITH G PATCH DOMAIN-CONTAINING PROTEIN"/>
    <property type="match status" value="1"/>
</dbReference>
<dbReference type="Pfam" id="PF01585">
    <property type="entry name" value="G-patch"/>
    <property type="match status" value="1"/>
</dbReference>
<dbReference type="SMART" id="SM00443">
    <property type="entry name" value="G_patch"/>
    <property type="match status" value="1"/>
</dbReference>
<dbReference type="SMART" id="SM00356">
    <property type="entry name" value="ZnF_C3H1"/>
    <property type="match status" value="1"/>
</dbReference>
<dbReference type="SUPFAM" id="SSF90229">
    <property type="entry name" value="CCCH zinc finger"/>
    <property type="match status" value="1"/>
</dbReference>
<dbReference type="SUPFAM" id="SSF63748">
    <property type="entry name" value="Tudor/PWWP/MBT"/>
    <property type="match status" value="1"/>
</dbReference>
<dbReference type="PROSITE" id="PS50174">
    <property type="entry name" value="G_PATCH"/>
    <property type="match status" value="1"/>
</dbReference>
<dbReference type="PROSITE" id="PS50103">
    <property type="entry name" value="ZF_C3H1"/>
    <property type="match status" value="1"/>
</dbReference>
<name>ZGPAT_DANRE</name>
<accession>Q7SXW2</accession>
<reference key="1">
    <citation type="submission" date="2003-07" db="EMBL/GenBank/DDBJ databases">
        <authorList>
            <consortium name="NIH - Zebrafish Gene Collection (ZGC) project"/>
        </authorList>
    </citation>
    <scope>NUCLEOTIDE SEQUENCE [LARGE SCALE MRNA]</scope>
    <source>
        <strain>AB</strain>
    </source>
</reference>
<comment type="function">
    <text evidence="1">Transcription repressor that specifically binds the 5'-GGAG[GA]A[GA]A-3' consensus sequence. Represses transcription by recruiting the chromatin multiprotein complex NuRD to target promoters. Negatively regulates expression of EGFR, a gene involved in cell proliferation, survival and migration (By similarity).</text>
</comment>
<comment type="subcellular location">
    <subcellularLocation>
        <location evidence="1">Nucleus</location>
    </subcellularLocation>
</comment>
<evidence type="ECO:0000250" key="1"/>
<evidence type="ECO:0000255" key="2">
    <source>
        <dbReference type="PROSITE-ProRule" id="PRU00092"/>
    </source>
</evidence>
<evidence type="ECO:0000255" key="3">
    <source>
        <dbReference type="PROSITE-ProRule" id="PRU00723"/>
    </source>
</evidence>
<evidence type="ECO:0000256" key="4">
    <source>
        <dbReference type="SAM" id="MobiDB-lite"/>
    </source>
</evidence>
<feature type="chain" id="PRO_0000385193" description="Zinc finger CCCH-type with G patch domain-containing protein">
    <location>
        <begin position="1"/>
        <end position="504"/>
    </location>
</feature>
<feature type="domain" description="G-patch" evidence="2">
    <location>
        <begin position="308"/>
        <end position="354"/>
    </location>
</feature>
<feature type="zinc finger region" description="C3H1-type" evidence="3">
    <location>
        <begin position="165"/>
        <end position="191"/>
    </location>
</feature>
<feature type="region of interest" description="Disordered" evidence="4">
    <location>
        <begin position="95"/>
        <end position="121"/>
    </location>
</feature>
<feature type="compositionally biased region" description="Acidic residues" evidence="4">
    <location>
        <begin position="107"/>
        <end position="118"/>
    </location>
</feature>
<sequence length="504" mass="55727">MDESSLEEAIGTYRAQLQQVELALSAGLGSAEQDDLLKLKEDLQQLIELTESSLVSVKKSQLLAALEEASTNQSDTSVPQETALDNEFAAFYAELSEDSNEVKPNPDTDEENEEEEQDISGTKVCAPYRTSWGTLEYHNAMVVCPEEPEGEEARVRVFYIHPTHKSMKPCGFYLEGKCRFMDNCRYSHGEVVCVSELRDFLEADISNMESGSACLAKHEDGIWYPARISEIEGGFYTVKFDSLLLKEAVLEADGIIPPLRQDDVSSSSSSDSEDDAECDGGYAKVFTSREEDLAQVNTAEFCGWEAHTRGIGSKLLMKMGYELGKGLGKTLSGRVEPVQAVVLPKGHSLDICAELTQRKTAAAIAKNNPTSHKRKAKKKKASTSTRHNVFDFLNSKLGDRAQSASHSSSSLVTGAEAYRGGKSTKRSLNVRLFEAAEKVTQVEREIQQLTKSLSKRNGRDAAVVSRLEEKLAASRKLLEQLKAQEQAIQREQKKADTHKKMTEF</sequence>
<keyword id="KW-0238">DNA-binding</keyword>
<keyword id="KW-0479">Metal-binding</keyword>
<keyword id="KW-0539">Nucleus</keyword>
<keyword id="KW-1185">Reference proteome</keyword>
<keyword id="KW-0678">Repressor</keyword>
<keyword id="KW-0804">Transcription</keyword>
<keyword id="KW-0805">Transcription regulation</keyword>
<keyword id="KW-0862">Zinc</keyword>
<keyword id="KW-0863">Zinc-finger</keyword>
<proteinExistence type="evidence at transcript level"/>